<sequence>MSRTETDSIGPIEVPEDAYWGAQTQRSLINFAIGDQRMPLAVLHALTLIKKAAARVNDRNGDLPADIARLIEQAADEVLDGQHDAQFPLVVWQTGSGTQSNMNVNEVIAGRANELAGQGRGGKSPVHPNDHVNRSQSSNDCFPTAMHIATAQAVKEQLLPAIAELSSGLAEQAARHMKLVKTGRTHMMDATPITFGQELSGFVAQLDYAEKAIRAALPAVYELAQGGTAVGTGLNAPKGFAEAIAAELAALSGLPFVTAPNKFAALAGHEPLAALSGALKTLAGTLMKIANDLRLLGSGPRAGLAEVRLPANEPGSSIMPGKVNPTQCEALSMLACQVMGNDVTIGFAASQGHLQLNVYKPVIIHNVLQSIRLLADGCSNFNEHCVAGMEPDAEKMAEHLERGLMLVTALNPHIGYDKSAHIAKKAYTEGLTLREAALALGYLTDEEFDAWVRPDKMLEAGSNG</sequence>
<accession>Q885V0</accession>
<dbReference type="EC" id="4.2.1.2" evidence="1"/>
<dbReference type="EMBL" id="AE016853">
    <property type="protein sequence ID" value="AAO55251.1"/>
    <property type="molecule type" value="Genomic_DNA"/>
</dbReference>
<dbReference type="RefSeq" id="NP_791556.1">
    <property type="nucleotide sequence ID" value="NC_004578.1"/>
</dbReference>
<dbReference type="RefSeq" id="WP_005766716.1">
    <property type="nucleotide sequence ID" value="NC_004578.1"/>
</dbReference>
<dbReference type="SMR" id="Q885V0"/>
<dbReference type="STRING" id="223283.PSPTO_1731"/>
<dbReference type="GeneID" id="1183368"/>
<dbReference type="KEGG" id="pst:PSPTO_1731"/>
<dbReference type="PATRIC" id="fig|223283.9.peg.1758"/>
<dbReference type="eggNOG" id="COG0114">
    <property type="taxonomic scope" value="Bacteria"/>
</dbReference>
<dbReference type="HOGENOM" id="CLU_021594_4_1_6"/>
<dbReference type="OrthoDB" id="9802809at2"/>
<dbReference type="PhylomeDB" id="Q885V0"/>
<dbReference type="UniPathway" id="UPA00223">
    <property type="reaction ID" value="UER01007"/>
</dbReference>
<dbReference type="Proteomes" id="UP000002515">
    <property type="component" value="Chromosome"/>
</dbReference>
<dbReference type="GO" id="GO:0005737">
    <property type="term" value="C:cytoplasm"/>
    <property type="evidence" value="ECO:0007669"/>
    <property type="project" value="UniProtKB-SubCell"/>
</dbReference>
<dbReference type="GO" id="GO:0004333">
    <property type="term" value="F:fumarate hydratase activity"/>
    <property type="evidence" value="ECO:0007669"/>
    <property type="project" value="UniProtKB-UniRule"/>
</dbReference>
<dbReference type="GO" id="GO:0006106">
    <property type="term" value="P:fumarate metabolic process"/>
    <property type="evidence" value="ECO:0007669"/>
    <property type="project" value="InterPro"/>
</dbReference>
<dbReference type="GO" id="GO:0006108">
    <property type="term" value="P:malate metabolic process"/>
    <property type="evidence" value="ECO:0007669"/>
    <property type="project" value="TreeGrafter"/>
</dbReference>
<dbReference type="GO" id="GO:0006099">
    <property type="term" value="P:tricarboxylic acid cycle"/>
    <property type="evidence" value="ECO:0007669"/>
    <property type="project" value="UniProtKB-UniRule"/>
</dbReference>
<dbReference type="CDD" id="cd01362">
    <property type="entry name" value="Fumarase_classII"/>
    <property type="match status" value="1"/>
</dbReference>
<dbReference type="FunFam" id="1.10.40.30:FF:000002">
    <property type="entry name" value="Fumarate hydratase class II"/>
    <property type="match status" value="1"/>
</dbReference>
<dbReference type="FunFam" id="1.10.275.10:FF:000001">
    <property type="entry name" value="Fumarate hydratase, mitochondrial"/>
    <property type="match status" value="1"/>
</dbReference>
<dbReference type="FunFam" id="1.20.200.10:FF:000001">
    <property type="entry name" value="Fumarate hydratase, mitochondrial"/>
    <property type="match status" value="1"/>
</dbReference>
<dbReference type="Gene3D" id="1.10.40.30">
    <property type="entry name" value="Fumarase/aspartase (C-terminal domain)"/>
    <property type="match status" value="1"/>
</dbReference>
<dbReference type="Gene3D" id="1.20.200.10">
    <property type="entry name" value="Fumarase/aspartase (Central domain)"/>
    <property type="match status" value="1"/>
</dbReference>
<dbReference type="Gene3D" id="1.10.275.10">
    <property type="entry name" value="Fumarase/aspartase (N-terminal domain)"/>
    <property type="match status" value="1"/>
</dbReference>
<dbReference type="HAMAP" id="MF_00743">
    <property type="entry name" value="FumaraseC"/>
    <property type="match status" value="1"/>
</dbReference>
<dbReference type="InterPro" id="IPR005677">
    <property type="entry name" value="Fum_hydII"/>
</dbReference>
<dbReference type="InterPro" id="IPR024083">
    <property type="entry name" value="Fumarase/histidase_N"/>
</dbReference>
<dbReference type="InterPro" id="IPR018951">
    <property type="entry name" value="Fumarase_C_C"/>
</dbReference>
<dbReference type="InterPro" id="IPR020557">
    <property type="entry name" value="Fumarate_lyase_CS"/>
</dbReference>
<dbReference type="InterPro" id="IPR000362">
    <property type="entry name" value="Fumarate_lyase_fam"/>
</dbReference>
<dbReference type="InterPro" id="IPR022761">
    <property type="entry name" value="Fumarate_lyase_N"/>
</dbReference>
<dbReference type="InterPro" id="IPR008948">
    <property type="entry name" value="L-Aspartase-like"/>
</dbReference>
<dbReference type="NCBIfam" id="TIGR00979">
    <property type="entry name" value="fumC_II"/>
    <property type="match status" value="1"/>
</dbReference>
<dbReference type="NCBIfam" id="NF009089">
    <property type="entry name" value="PRK12425.1"/>
    <property type="match status" value="1"/>
</dbReference>
<dbReference type="PANTHER" id="PTHR11444">
    <property type="entry name" value="ASPARTATEAMMONIA/ARGININOSUCCINATE/ADENYLOSUCCINATE LYASE"/>
    <property type="match status" value="1"/>
</dbReference>
<dbReference type="PANTHER" id="PTHR11444:SF1">
    <property type="entry name" value="FUMARATE HYDRATASE, MITOCHONDRIAL"/>
    <property type="match status" value="1"/>
</dbReference>
<dbReference type="Pfam" id="PF10415">
    <property type="entry name" value="FumaraseC_C"/>
    <property type="match status" value="1"/>
</dbReference>
<dbReference type="Pfam" id="PF00206">
    <property type="entry name" value="Lyase_1"/>
    <property type="match status" value="1"/>
</dbReference>
<dbReference type="PRINTS" id="PR00145">
    <property type="entry name" value="ARGSUCLYASE"/>
</dbReference>
<dbReference type="PRINTS" id="PR00149">
    <property type="entry name" value="FUMRATELYASE"/>
</dbReference>
<dbReference type="SUPFAM" id="SSF48557">
    <property type="entry name" value="L-aspartase-like"/>
    <property type="match status" value="1"/>
</dbReference>
<dbReference type="PROSITE" id="PS00163">
    <property type="entry name" value="FUMARATE_LYASES"/>
    <property type="match status" value="1"/>
</dbReference>
<gene>
    <name evidence="1" type="primary">fumC</name>
    <name type="synonym">fumC-1</name>
    <name type="ordered locus">PSPTO_1731</name>
</gene>
<reference key="1">
    <citation type="journal article" date="2003" name="Proc. Natl. Acad. Sci. U.S.A.">
        <title>The complete genome sequence of the Arabidopsis and tomato pathogen Pseudomonas syringae pv. tomato DC3000.</title>
        <authorList>
            <person name="Buell C.R."/>
            <person name="Joardar V."/>
            <person name="Lindeberg M."/>
            <person name="Selengut J."/>
            <person name="Paulsen I.T."/>
            <person name="Gwinn M.L."/>
            <person name="Dodson R.J."/>
            <person name="DeBoy R.T."/>
            <person name="Durkin A.S."/>
            <person name="Kolonay J.F."/>
            <person name="Madupu R."/>
            <person name="Daugherty S.C."/>
            <person name="Brinkac L.M."/>
            <person name="Beanan M.J."/>
            <person name="Haft D.H."/>
            <person name="Nelson W.C."/>
            <person name="Davidsen T.M."/>
            <person name="Zafar N."/>
            <person name="Zhou L."/>
            <person name="Liu J."/>
            <person name="Yuan Q."/>
            <person name="Khouri H.M."/>
            <person name="Fedorova N.B."/>
            <person name="Tran B."/>
            <person name="Russell D."/>
            <person name="Berry K.J."/>
            <person name="Utterback T.R."/>
            <person name="Van Aken S.E."/>
            <person name="Feldblyum T.V."/>
            <person name="D'Ascenzo M."/>
            <person name="Deng W.-L."/>
            <person name="Ramos A.R."/>
            <person name="Alfano J.R."/>
            <person name="Cartinhour S."/>
            <person name="Chatterjee A.K."/>
            <person name="Delaney T.P."/>
            <person name="Lazarowitz S.G."/>
            <person name="Martin G.B."/>
            <person name="Schneider D.J."/>
            <person name="Tang X."/>
            <person name="Bender C.L."/>
            <person name="White O."/>
            <person name="Fraser C.M."/>
            <person name="Collmer A."/>
        </authorList>
    </citation>
    <scope>NUCLEOTIDE SEQUENCE [LARGE SCALE GENOMIC DNA]</scope>
    <source>
        <strain>ATCC BAA-871 / DC3000</strain>
    </source>
</reference>
<organism>
    <name type="scientific">Pseudomonas syringae pv. tomato (strain ATCC BAA-871 / DC3000)</name>
    <dbReference type="NCBI Taxonomy" id="223283"/>
    <lineage>
        <taxon>Bacteria</taxon>
        <taxon>Pseudomonadati</taxon>
        <taxon>Pseudomonadota</taxon>
        <taxon>Gammaproteobacteria</taxon>
        <taxon>Pseudomonadales</taxon>
        <taxon>Pseudomonadaceae</taxon>
        <taxon>Pseudomonas</taxon>
    </lineage>
</organism>
<keyword id="KW-0963">Cytoplasm</keyword>
<keyword id="KW-0456">Lyase</keyword>
<keyword id="KW-1185">Reference proteome</keyword>
<keyword id="KW-0816">Tricarboxylic acid cycle</keyword>
<name>FUMC_PSESM</name>
<comment type="function">
    <text evidence="1">Involved in the TCA cycle. Catalyzes the stereospecific interconversion of fumarate to L-malate.</text>
</comment>
<comment type="catalytic activity">
    <reaction evidence="1">
        <text>(S)-malate = fumarate + H2O</text>
        <dbReference type="Rhea" id="RHEA:12460"/>
        <dbReference type="ChEBI" id="CHEBI:15377"/>
        <dbReference type="ChEBI" id="CHEBI:15589"/>
        <dbReference type="ChEBI" id="CHEBI:29806"/>
        <dbReference type="EC" id="4.2.1.2"/>
    </reaction>
</comment>
<comment type="pathway">
    <text evidence="1">Carbohydrate metabolism; tricarboxylic acid cycle; (S)-malate from fumarate: step 1/1.</text>
</comment>
<comment type="subunit">
    <text evidence="1">Homotetramer.</text>
</comment>
<comment type="subcellular location">
    <subcellularLocation>
        <location evidence="1">Cytoplasm</location>
    </subcellularLocation>
</comment>
<comment type="miscellaneous">
    <text evidence="1">There are 2 substrate-binding sites: the catalytic A site, and the non-catalytic B site that may play a role in the transfer of substrate or product between the active site and the solvent. Alternatively, the B site may bind allosteric effectors.</text>
</comment>
<comment type="similarity">
    <text evidence="1">Belongs to the class-II fumarase/aspartase family. Fumarase subfamily.</text>
</comment>
<proteinExistence type="inferred from homology"/>
<feature type="chain" id="PRO_0000161302" description="Fumarate hydratase class II">
    <location>
        <begin position="1"/>
        <end position="464"/>
    </location>
</feature>
<feature type="active site" description="Proton donor/acceptor" evidence="1">
    <location>
        <position position="186"/>
    </location>
</feature>
<feature type="active site" evidence="1">
    <location>
        <position position="316"/>
    </location>
</feature>
<feature type="binding site" evidence="1">
    <location>
        <begin position="96"/>
        <end position="98"/>
    </location>
    <ligand>
        <name>substrate</name>
    </ligand>
</feature>
<feature type="binding site" description="in site B" evidence="1">
    <location>
        <begin position="127"/>
        <end position="130"/>
    </location>
    <ligand>
        <name>substrate</name>
    </ligand>
</feature>
<feature type="binding site" evidence="1">
    <location>
        <begin position="137"/>
        <end position="139"/>
    </location>
    <ligand>
        <name>substrate</name>
    </ligand>
</feature>
<feature type="binding site" evidence="1">
    <location>
        <position position="185"/>
    </location>
    <ligand>
        <name>substrate</name>
    </ligand>
</feature>
<feature type="binding site" evidence="1">
    <location>
        <position position="317"/>
    </location>
    <ligand>
        <name>substrate</name>
    </ligand>
</feature>
<feature type="binding site" evidence="1">
    <location>
        <begin position="322"/>
        <end position="324"/>
    </location>
    <ligand>
        <name>substrate</name>
    </ligand>
</feature>
<feature type="site" description="Important for catalytic activity" evidence="1">
    <location>
        <position position="329"/>
    </location>
</feature>
<protein>
    <recommendedName>
        <fullName evidence="1">Fumarate hydratase class II</fullName>
        <shortName evidence="1">Fumarase C</shortName>
        <ecNumber evidence="1">4.2.1.2</ecNumber>
    </recommendedName>
    <alternativeName>
        <fullName evidence="1">Aerobic fumarase</fullName>
    </alternativeName>
    <alternativeName>
        <fullName evidence="1">Iron-independent fumarase</fullName>
    </alternativeName>
</protein>
<evidence type="ECO:0000255" key="1">
    <source>
        <dbReference type="HAMAP-Rule" id="MF_00743"/>
    </source>
</evidence>